<comment type="function">
    <text>Catalyzes erythromycin N-demethylation, nifedipine oxidation and testosterone 6 beta-hydroxylation.</text>
</comment>
<comment type="catalytic activity">
    <reaction>
        <text>an organic molecule + reduced [NADPH--hemoprotein reductase] + O2 = an alcohol + oxidized [NADPH--hemoprotein reductase] + H2O + H(+)</text>
        <dbReference type="Rhea" id="RHEA:17149"/>
        <dbReference type="Rhea" id="RHEA-COMP:11964"/>
        <dbReference type="Rhea" id="RHEA-COMP:11965"/>
        <dbReference type="ChEBI" id="CHEBI:15377"/>
        <dbReference type="ChEBI" id="CHEBI:15378"/>
        <dbReference type="ChEBI" id="CHEBI:15379"/>
        <dbReference type="ChEBI" id="CHEBI:30879"/>
        <dbReference type="ChEBI" id="CHEBI:57618"/>
        <dbReference type="ChEBI" id="CHEBI:58210"/>
        <dbReference type="ChEBI" id="CHEBI:142491"/>
        <dbReference type="EC" id="1.14.14.1"/>
    </reaction>
</comment>
<comment type="cofactor">
    <cofactor evidence="1">
        <name>heme</name>
        <dbReference type="ChEBI" id="CHEBI:30413"/>
    </cofactor>
</comment>
<comment type="subcellular location">
    <subcellularLocation>
        <location>Endoplasmic reticulum membrane</location>
        <topology>Peripheral membrane protein</topology>
    </subcellularLocation>
    <subcellularLocation>
        <location>Microsome membrane</location>
        <topology>Peripheral membrane protein</topology>
    </subcellularLocation>
</comment>
<comment type="tissue specificity">
    <text>Highly expressed in liver.</text>
</comment>
<comment type="induction">
    <text>By dexamethasone.</text>
</comment>
<comment type="similarity">
    <text evidence="2">Belongs to the cytochrome P450 family.</text>
</comment>
<dbReference type="EC" id="1.14.14.1"/>
<dbReference type="EMBL" id="X60452">
    <property type="protein sequence ID" value="CAA42981.1"/>
    <property type="molecule type" value="mRNA"/>
</dbReference>
<dbReference type="EMBL" id="BC010528">
    <property type="protein sequence ID" value="AAH10528.1"/>
    <property type="molecule type" value="mRNA"/>
</dbReference>
<dbReference type="CCDS" id="CCDS19865.1"/>
<dbReference type="PIR" id="S22334">
    <property type="entry name" value="A60564"/>
</dbReference>
<dbReference type="RefSeq" id="NP_031844.1">
    <property type="nucleotide sequence ID" value="NM_007818.3"/>
</dbReference>
<dbReference type="SMR" id="Q64459"/>
<dbReference type="FunCoup" id="Q64459">
    <property type="interactions" value="800"/>
</dbReference>
<dbReference type="IntAct" id="Q64459">
    <property type="interactions" value="3"/>
</dbReference>
<dbReference type="STRING" id="10090.ENSMUSP00000037665"/>
<dbReference type="ChEMBL" id="CHEMBL1907984"/>
<dbReference type="iPTMnet" id="Q64459"/>
<dbReference type="PhosphoSitePlus" id="Q64459"/>
<dbReference type="SwissPalm" id="Q64459"/>
<dbReference type="jPOST" id="Q64459"/>
<dbReference type="PaxDb" id="10090-ENSMUSP00000037665"/>
<dbReference type="ProteomicsDB" id="283999"/>
<dbReference type="DNASU" id="13112"/>
<dbReference type="Ensembl" id="ENSMUST00000035918.8">
    <property type="protein sequence ID" value="ENSMUSP00000037665.8"/>
    <property type="gene ID" value="ENSMUSG00000056035.9"/>
</dbReference>
<dbReference type="GeneID" id="13112"/>
<dbReference type="KEGG" id="mmu:13112"/>
<dbReference type="UCSC" id="uc009amy.1">
    <property type="organism name" value="mouse"/>
</dbReference>
<dbReference type="AGR" id="MGI:88609"/>
<dbReference type="CTD" id="13112"/>
<dbReference type="MGI" id="MGI:88609">
    <property type="gene designation" value="Cyp3a11"/>
</dbReference>
<dbReference type="VEuPathDB" id="HostDB:ENSMUSG00000056035"/>
<dbReference type="eggNOG" id="KOG0158">
    <property type="taxonomic scope" value="Eukaryota"/>
</dbReference>
<dbReference type="GeneTree" id="ENSGT00950000182958"/>
<dbReference type="HOGENOM" id="CLU_001570_5_2_1"/>
<dbReference type="InParanoid" id="Q64459"/>
<dbReference type="OMA" id="VRMYNFT"/>
<dbReference type="OrthoDB" id="1470350at2759"/>
<dbReference type="PhylomeDB" id="Q64459"/>
<dbReference type="TreeFam" id="TF105087"/>
<dbReference type="BRENDA" id="1.14.99.38">
    <property type="organism ID" value="3474"/>
</dbReference>
<dbReference type="Reactome" id="R-MMU-211945">
    <property type="pathway name" value="Phase I - Functionalization of compounds"/>
</dbReference>
<dbReference type="Reactome" id="R-MMU-211958">
    <property type="pathway name" value="Miscellaneous substrates"/>
</dbReference>
<dbReference type="Reactome" id="R-MMU-211981">
    <property type="pathway name" value="Xenobiotics"/>
</dbReference>
<dbReference type="Reactome" id="R-MMU-5423646">
    <property type="pathway name" value="Aflatoxin activation and detoxification"/>
</dbReference>
<dbReference type="Reactome" id="R-MMU-9027307">
    <property type="pathway name" value="Biosynthesis of maresin-like SPMs"/>
</dbReference>
<dbReference type="Reactome" id="R-MMU-9749641">
    <property type="pathway name" value="Aspirin ADME"/>
</dbReference>
<dbReference type="Reactome" id="R-MMU-9754706">
    <property type="pathway name" value="Atorvastatin ADME"/>
</dbReference>
<dbReference type="Reactome" id="R-MMU-9757110">
    <property type="pathway name" value="Prednisone ADME"/>
</dbReference>
<dbReference type="BioGRID-ORCS" id="13112">
    <property type="hits" value="2 hits in 80 CRISPR screens"/>
</dbReference>
<dbReference type="ChiTaRS" id="Cyp3a11">
    <property type="organism name" value="mouse"/>
</dbReference>
<dbReference type="PRO" id="PR:Q64459"/>
<dbReference type="Proteomes" id="UP000000589">
    <property type="component" value="Chromosome 5"/>
</dbReference>
<dbReference type="RNAct" id="Q64459">
    <property type="molecule type" value="protein"/>
</dbReference>
<dbReference type="Bgee" id="ENSMUSG00000056035">
    <property type="expression patterns" value="Expressed in small intestine Peyer's patch and 127 other cell types or tissues"/>
</dbReference>
<dbReference type="ExpressionAtlas" id="Q64459">
    <property type="expression patterns" value="baseline and differential"/>
</dbReference>
<dbReference type="GO" id="GO:0005789">
    <property type="term" value="C:endoplasmic reticulum membrane"/>
    <property type="evidence" value="ECO:0007669"/>
    <property type="project" value="UniProtKB-SubCell"/>
</dbReference>
<dbReference type="GO" id="GO:0020037">
    <property type="term" value="F:heme binding"/>
    <property type="evidence" value="ECO:0007669"/>
    <property type="project" value="InterPro"/>
</dbReference>
<dbReference type="GO" id="GO:0005506">
    <property type="term" value="F:iron ion binding"/>
    <property type="evidence" value="ECO:0007669"/>
    <property type="project" value="InterPro"/>
</dbReference>
<dbReference type="GO" id="GO:0004497">
    <property type="term" value="F:monooxygenase activity"/>
    <property type="evidence" value="ECO:0000314"/>
    <property type="project" value="MGI"/>
</dbReference>
<dbReference type="GO" id="GO:0016712">
    <property type="term" value="F:oxidoreductase activity, acting on paired donors, with incorporation or reduction of molecular oxygen, reduced flavin or flavoprotein as one donor, and incorporation of one atom of oxygen"/>
    <property type="evidence" value="ECO:0007669"/>
    <property type="project" value="UniProtKB-EC"/>
</dbReference>
<dbReference type="GO" id="GO:0009617">
    <property type="term" value="P:response to bacterium"/>
    <property type="evidence" value="ECO:0000270"/>
    <property type="project" value="MGI"/>
</dbReference>
<dbReference type="CDD" id="cd20650">
    <property type="entry name" value="CYP3A"/>
    <property type="match status" value="1"/>
</dbReference>
<dbReference type="FunFam" id="1.10.630.10:FF:000096">
    <property type="entry name" value="Cytochrome P450 3A4"/>
    <property type="match status" value="1"/>
</dbReference>
<dbReference type="Gene3D" id="1.10.630.10">
    <property type="entry name" value="Cytochrome P450"/>
    <property type="match status" value="1"/>
</dbReference>
<dbReference type="InterPro" id="IPR001128">
    <property type="entry name" value="Cyt_P450"/>
</dbReference>
<dbReference type="InterPro" id="IPR017972">
    <property type="entry name" value="Cyt_P450_CS"/>
</dbReference>
<dbReference type="InterPro" id="IPR008072">
    <property type="entry name" value="Cyt_P450_E_CYP3A"/>
</dbReference>
<dbReference type="InterPro" id="IPR002402">
    <property type="entry name" value="Cyt_P450_E_grp-II"/>
</dbReference>
<dbReference type="InterPro" id="IPR036396">
    <property type="entry name" value="Cyt_P450_sf"/>
</dbReference>
<dbReference type="InterPro" id="IPR050705">
    <property type="entry name" value="Cytochrome_P450_3A"/>
</dbReference>
<dbReference type="PANTHER" id="PTHR24302:SF49">
    <property type="entry name" value="CYTOCHROME P450 3A-RELATED"/>
    <property type="match status" value="1"/>
</dbReference>
<dbReference type="PANTHER" id="PTHR24302">
    <property type="entry name" value="CYTOCHROME P450 FAMILY 3"/>
    <property type="match status" value="1"/>
</dbReference>
<dbReference type="Pfam" id="PF00067">
    <property type="entry name" value="p450"/>
    <property type="match status" value="1"/>
</dbReference>
<dbReference type="PRINTS" id="PR00464">
    <property type="entry name" value="EP450II"/>
</dbReference>
<dbReference type="PRINTS" id="PR01689">
    <property type="entry name" value="EP450IICYP3A"/>
</dbReference>
<dbReference type="PRINTS" id="PR00385">
    <property type="entry name" value="P450"/>
</dbReference>
<dbReference type="SUPFAM" id="SSF48264">
    <property type="entry name" value="Cytochrome P450"/>
    <property type="match status" value="1"/>
</dbReference>
<dbReference type="PROSITE" id="PS00086">
    <property type="entry name" value="CYTOCHROME_P450"/>
    <property type="match status" value="1"/>
</dbReference>
<protein>
    <recommendedName>
        <fullName>Cytochrome P450 3A11</fullName>
        <ecNumber>1.14.14.1</ecNumber>
    </recommendedName>
    <alternativeName>
        <fullName>CYPIIIA11</fullName>
    </alternativeName>
    <alternativeName>
        <fullName>Cytochrome P-450IIIAM1</fullName>
    </alternativeName>
    <alternativeName>
        <fullName>Cytochrome P-450UT</fullName>
    </alternativeName>
</protein>
<sequence length="504" mass="57855">MDLVSALSLETWVLLAISLVLLYRYGTRKHELFKKQGIPGPKPLPFLGTVLNYYKGLWKFDMECYKKYGKTWGLFDGQTPLLAVTDPETIKNVLVKECFSVFTNRRDFGPVGIMSKAISISKDDEWKRYRALLSPTFTSGKLKEMFPVIEQYGDILVKYLRQKAKKGKPVTMKDVLGAYSMDVITSTSFGVNVDSLNNPEDPFVEKAKKLLRFDFFDPLLFSVVLFPFLTPVYEMLNICMFPKDSIEFFKKFVDRMKESRLDSKQKHRVDFLQLMMNSHNNSKDKVSHKALSDMEITAQSIIFIFAGYETTSSTLSFTLHSLATHPDIQKKLQDEIDEALPNKAPPTYDTVMEMEYLDMVLNETLRLYPIANRLERVCKKDVELNGVYIPKGSTVMIPSYALHHDPQHWSEPEEFQPERFSKENKGSIDPYVYLPFGNGPRNCLGMRFALMNMKLALTKIMQNFSFQPCKETQIPLKLSRQGLLQPEKPIVLKVVPRDAVITGA</sequence>
<keyword id="KW-0903">Direct protein sequencing</keyword>
<keyword id="KW-0256">Endoplasmic reticulum</keyword>
<keyword id="KW-0349">Heme</keyword>
<keyword id="KW-0408">Iron</keyword>
<keyword id="KW-0472">Membrane</keyword>
<keyword id="KW-0479">Metal-binding</keyword>
<keyword id="KW-0492">Microsome</keyword>
<keyword id="KW-0503">Monooxygenase</keyword>
<keyword id="KW-0560">Oxidoreductase</keyword>
<keyword id="KW-1185">Reference proteome</keyword>
<proteinExistence type="evidence at protein level"/>
<evidence type="ECO:0000250" key="1"/>
<evidence type="ECO:0000305" key="2"/>
<feature type="chain" id="PRO_0000051794" description="Cytochrome P450 3A11">
    <location>
        <begin position="1"/>
        <end position="504"/>
    </location>
</feature>
<feature type="binding site" description="axial binding residue" evidence="1">
    <location>
        <position position="443"/>
    </location>
    <ligand>
        <name>heme</name>
        <dbReference type="ChEBI" id="CHEBI:30413"/>
    </ligand>
    <ligandPart>
        <name>Fe</name>
        <dbReference type="ChEBI" id="CHEBI:18248"/>
    </ligandPart>
</feature>
<reference key="1">
    <citation type="journal article" date="1992" name="Biochim. Biophys. Acta">
        <title>Mouse liver cytochrome P-450 (P-450IIIAM1): its cDNA cloning and inducibility by dexamethasone.</title>
        <authorList>
            <person name="Yanagimoto T."/>
            <person name="Itoh S."/>
            <person name="Muller-Enoch D."/>
            <person name="Kamataki T."/>
        </authorList>
    </citation>
    <scope>NUCLEOTIDE SEQUENCE [MRNA]</scope>
    <source>
        <strain>ddY</strain>
        <tissue>Liver</tissue>
    </source>
</reference>
<reference key="2">
    <citation type="journal article" date="2004" name="Genome Res.">
        <title>The status, quality, and expansion of the NIH full-length cDNA project: the Mammalian Gene Collection (MGC).</title>
        <authorList>
            <consortium name="The MGC Project Team"/>
        </authorList>
    </citation>
    <scope>NUCLEOTIDE SEQUENCE [LARGE SCALE MRNA]</scope>
    <source>
        <tissue>Liver</tissue>
    </source>
</reference>
<reference key="3">
    <citation type="journal article" date="1990" name="Mol. Pharmacol.">
        <title>Selective inactivation of mouse liver cytochrome P-450IIIA by cannabidiol.</title>
        <authorList>
            <person name="Bornheim L.M."/>
            <person name="Correia M.A."/>
        </authorList>
    </citation>
    <scope>PROTEIN SEQUENCE OF 1-17 AND 22-24</scope>
</reference>
<reference key="4">
    <citation type="journal article" date="2010" name="Cell">
        <title>A tissue-specific atlas of mouse protein phosphorylation and expression.</title>
        <authorList>
            <person name="Huttlin E.L."/>
            <person name="Jedrychowski M.P."/>
            <person name="Elias J.E."/>
            <person name="Goswami T."/>
            <person name="Rad R."/>
            <person name="Beausoleil S.A."/>
            <person name="Villen J."/>
            <person name="Haas W."/>
            <person name="Sowa M.E."/>
            <person name="Gygi S.P."/>
        </authorList>
    </citation>
    <scope>IDENTIFICATION BY MASS SPECTROMETRY [LARGE SCALE ANALYSIS]</scope>
    <source>
        <tissue>Liver</tissue>
    </source>
</reference>
<accession>Q64459</accession>
<name>CP3AB_MOUSE</name>
<organism>
    <name type="scientific">Mus musculus</name>
    <name type="common">Mouse</name>
    <dbReference type="NCBI Taxonomy" id="10090"/>
    <lineage>
        <taxon>Eukaryota</taxon>
        <taxon>Metazoa</taxon>
        <taxon>Chordata</taxon>
        <taxon>Craniata</taxon>
        <taxon>Vertebrata</taxon>
        <taxon>Euteleostomi</taxon>
        <taxon>Mammalia</taxon>
        <taxon>Eutheria</taxon>
        <taxon>Euarchontoglires</taxon>
        <taxon>Glires</taxon>
        <taxon>Rodentia</taxon>
        <taxon>Myomorpha</taxon>
        <taxon>Muroidea</taxon>
        <taxon>Muridae</taxon>
        <taxon>Murinae</taxon>
        <taxon>Mus</taxon>
        <taxon>Mus</taxon>
    </lineage>
</organism>
<gene>
    <name type="primary">Cyp3a11</name>
    <name type="synonym">Cyp3a-11</name>
</gene>